<gene>
    <name type="primary">SLC34A3</name>
    <name type="synonym">NPT2C</name>
    <name type="synonym">NPTIIC</name>
</gene>
<name>NPT2C_HUMAN</name>
<accession>Q8N130</accession>
<accession>A2BFA1</accession>
<protein>
    <recommendedName>
        <fullName>Sodium-dependent phosphate transport protein 2C</fullName>
        <shortName>Sodium-phosphate transport protein 2C</shortName>
    </recommendedName>
    <alternativeName>
        <fullName>Na(+)-dependent phosphate cotransporter 2C</fullName>
    </alternativeName>
    <alternativeName>
        <fullName>Sodium/inorganic phosphate cotransporter IIC</fullName>
    </alternativeName>
    <alternativeName>
        <fullName>Sodium/phosphate cotransporter 2C</fullName>
        <shortName>Na(+)/Pi cotransporter 2C</shortName>
        <shortName>NaPi-2c</shortName>
    </alternativeName>
    <alternativeName>
        <fullName>Solute carrier family 34 member 3</fullName>
    </alternativeName>
</protein>
<proteinExistence type="evidence at protein level"/>
<keyword id="KW-1003">Cell membrane</keyword>
<keyword id="KW-0225">Disease variant</keyword>
<keyword id="KW-1015">Disulfide bond</keyword>
<keyword id="KW-0325">Glycoprotein</keyword>
<keyword id="KW-0406">Ion transport</keyword>
<keyword id="KW-0472">Membrane</keyword>
<keyword id="KW-0597">Phosphoprotein</keyword>
<keyword id="KW-1267">Proteomics identification</keyword>
<keyword id="KW-1185">Reference proteome</keyword>
<keyword id="KW-0915">Sodium</keyword>
<keyword id="KW-0739">Sodium transport</keyword>
<keyword id="KW-0769">Symport</keyword>
<keyword id="KW-0812">Transmembrane</keyword>
<keyword id="KW-1133">Transmembrane helix</keyword>
<keyword id="KW-0813">Transport</keyword>
<comment type="function">
    <text evidence="2 5">Involved in actively transporting phosphate into cells via Na(+) cotransport in the renal brush border membrane (PubMed:11880379). The cotransport has a Na(+):Pi stoichiometry of 2:1 and is electroneutral (By similarity).</text>
</comment>
<comment type="catalytic activity">
    <reaction evidence="5">
        <text>2 Na(+)(out) + phosphate(out) = 2 Na(+)(in) + phosphate(in)</text>
        <dbReference type="Rhea" id="RHEA:71259"/>
        <dbReference type="ChEBI" id="CHEBI:29101"/>
        <dbReference type="ChEBI" id="CHEBI:43474"/>
    </reaction>
    <physiologicalReaction direction="left-to-right" evidence="10">
        <dbReference type="Rhea" id="RHEA:71260"/>
    </physiologicalReaction>
</comment>
<comment type="biophysicochemical properties">
    <kinetics>
        <KM evidence="5">79 uM for phosphate</KM>
    </kinetics>
    <phDependence>
        <text evidence="5">Optimum pH is 7.5.</text>
    </phDependence>
</comment>
<comment type="interaction">
    <interactant intactId="EBI-17769653">
        <id>Q8N130</id>
    </interactant>
    <interactant intactId="EBI-17274839">
        <id>P58418</id>
        <label>CLRN1</label>
    </interactant>
    <organismsDiffer>false</organismsDiffer>
    <experiments>3</experiments>
</comment>
<comment type="interaction">
    <interactant intactId="EBI-17769653">
        <id>Q8N130</id>
    </interactant>
    <interactant intactId="EBI-11721746">
        <id>Q8TED1</id>
        <label>GPX8</label>
    </interactant>
    <organismsDiffer>false</organismsDiffer>
    <experiments>3</experiments>
</comment>
<comment type="interaction">
    <interactant intactId="EBI-17769653">
        <id>Q8N130</id>
    </interactant>
    <interactant intactId="EBI-17684533">
        <id>Q9NRX6</id>
        <label>TMEM167B</label>
    </interactant>
    <organismsDiffer>false</organismsDiffer>
    <experiments>3</experiments>
</comment>
<comment type="interaction">
    <interactant intactId="EBI-17769653">
        <id>Q8N130</id>
    </interactant>
    <interactant intactId="EBI-8642211">
        <id>Q8WY98</id>
        <label>TMEM234</label>
    </interactant>
    <organismsDiffer>false</organismsDiffer>
    <experiments>3</experiments>
</comment>
<comment type="subcellular location">
    <subcellularLocation>
        <location evidence="3">Apical cell membrane</location>
        <topology evidence="4">Multi-pass membrane protein</topology>
    </subcellularLocation>
    <text evidence="3">ocalized at the brush border membrane in the kidney.</text>
</comment>
<comment type="tissue specificity">
    <text evidence="5">Expressed only in the kidney.</text>
</comment>
<comment type="disease" evidence="7 8">
    <disease id="DI-01719">
        <name>Hereditary hypophosphatemic rickets with hypercalciuria</name>
        <acronym>HHRH</acronym>
        <description>Autosomal recessive form of hypophosphatemia characterized by reduced renal phosphate reabsorption and rickets. Increased serum levels of 1,25-dihydroxyvitamin D lead to increase in urinary calcium excretion.</description>
        <dbReference type="MIM" id="241530"/>
    </disease>
    <text>The disease is caused by variants affecting the gene represented in this entry.</text>
</comment>
<comment type="similarity">
    <text evidence="9">Belongs to the SLC34A transporter family.</text>
</comment>
<sequence length="599" mass="63550">MPSSLPGSQVPHPTLDAVDLVEKTLRNEGTSSSAPVLEEGDTDPWTLPQLKDTSQPWKELRVAGRLRRVAGSVLKACGLLGSLYFFICSLDVLSSAFQLLGSKVAGDIFKDNVVLSNPVAGLVIGVLVTALVQSSSTSSSIVVSMVAAKLLTVRVSVPIIMGVNVGTSITSTLVSMAQSGDRDEFQRAFSGSAVHGIFNWLTVLVLLPLESATALLERLSELALGAASLTPRAQAPDILKVLTKPLTHLIVQLDSDMIMSSATGNATNSSLIKHWCGTTGQPTQENSSCGAFGPCTEKNSTAPADRLPCRHLFAGTELTDLAVGCILLAGSLLVLCGCLVLIVKLLNSVLRGRVAQVVRTVINADFPFPLGWLGGYLAVLAGAGLTFALQSSSVFTAAVVPLMGVGVISLDRAYPLLLGSNIGTTTTALLAALASPADRMLSALQVALIHFFFNLAGILLWYLVPALRLPIPLARHFGVVTARYRWVAGVYLLLGFLLLPLAAFGLSLAGGMELAAVGGPLVGLVLLVILVTVLQRRRPAWLPVRLRSWAWLPVWLHSLEPWDRLVTRCCPCNVCSPPKATTKEAYCYENPEILASQQL</sequence>
<dbReference type="EMBL" id="AB055000">
    <property type="protein sequence ID" value="BAB83242.1"/>
    <property type="molecule type" value="mRNA"/>
</dbReference>
<dbReference type="EMBL" id="AK095999">
    <property type="protein sequence ID" value="BAC04667.1"/>
    <property type="molecule type" value="mRNA"/>
</dbReference>
<dbReference type="EMBL" id="BX255925">
    <property type="status" value="NOT_ANNOTATED_CDS"/>
    <property type="molecule type" value="Genomic_DNA"/>
</dbReference>
<dbReference type="CCDS" id="CCDS7038.1"/>
<dbReference type="RefSeq" id="NP_001170787.2">
    <property type="nucleotide sequence ID" value="NM_001177316.2"/>
</dbReference>
<dbReference type="RefSeq" id="NP_001170788.2">
    <property type="nucleotide sequence ID" value="NM_001177317.2"/>
</dbReference>
<dbReference type="RefSeq" id="NP_543153.2">
    <property type="nucleotide sequence ID" value="NM_080877.3"/>
</dbReference>
<dbReference type="RefSeq" id="XP_016869781.1">
    <property type="nucleotide sequence ID" value="XM_017014292.1"/>
</dbReference>
<dbReference type="RefSeq" id="XP_047278749.1">
    <property type="nucleotide sequence ID" value="XM_047422793.1"/>
</dbReference>
<dbReference type="SMR" id="Q8N130"/>
<dbReference type="BioGRID" id="126771">
    <property type="interactions" value="7"/>
</dbReference>
<dbReference type="FunCoup" id="Q8N130">
    <property type="interactions" value="14"/>
</dbReference>
<dbReference type="IntAct" id="Q8N130">
    <property type="interactions" value="5"/>
</dbReference>
<dbReference type="STRING" id="9606.ENSP00000442397"/>
<dbReference type="BindingDB" id="Q8N130"/>
<dbReference type="ChEMBL" id="CHEMBL4295900"/>
<dbReference type="DrugBank" id="DB11348">
    <property type="generic name" value="Calcium Phosphate"/>
</dbReference>
<dbReference type="DrugBank" id="DB14481">
    <property type="generic name" value="Calcium phosphate dihydrate"/>
</dbReference>
<dbReference type="DrugBank" id="DB14502">
    <property type="generic name" value="Sodium phosphate, dibasic"/>
</dbReference>
<dbReference type="DrugBank" id="DB09449">
    <property type="generic name" value="Sodium phosphate, monobasic"/>
</dbReference>
<dbReference type="DrugBank" id="DB14503">
    <property type="generic name" value="Sodium phosphate, monobasic, unspecified form"/>
</dbReference>
<dbReference type="TCDB" id="2.A.58.1.3">
    <property type="family name" value="the phosphate:na(+) symporter (pnas) family"/>
</dbReference>
<dbReference type="GlyCosmos" id="Q8N130">
    <property type="glycosylation" value="4 sites, No reported glycans"/>
</dbReference>
<dbReference type="GlyGen" id="Q8N130">
    <property type="glycosylation" value="4 sites"/>
</dbReference>
<dbReference type="iPTMnet" id="Q8N130"/>
<dbReference type="PhosphoSitePlus" id="Q8N130"/>
<dbReference type="BioMuta" id="SLC34A3"/>
<dbReference type="DMDM" id="313104149"/>
<dbReference type="MassIVE" id="Q8N130"/>
<dbReference type="PaxDb" id="9606-ENSP00000442397"/>
<dbReference type="PeptideAtlas" id="Q8N130"/>
<dbReference type="ProteomicsDB" id="71531"/>
<dbReference type="Antibodypedia" id="18978">
    <property type="antibodies" value="117 antibodies from 21 providers"/>
</dbReference>
<dbReference type="DNASU" id="142680"/>
<dbReference type="Ensembl" id="ENST00000361134.2">
    <property type="protein sequence ID" value="ENSP00000355353.2"/>
    <property type="gene ID" value="ENSG00000198569.10"/>
</dbReference>
<dbReference type="Ensembl" id="ENST00000538474.5">
    <property type="protein sequence ID" value="ENSP00000442397.1"/>
    <property type="gene ID" value="ENSG00000198569.10"/>
</dbReference>
<dbReference type="Ensembl" id="ENST00000673835.1">
    <property type="protein sequence ID" value="ENSP00000501114.1"/>
    <property type="gene ID" value="ENSG00000198569.10"/>
</dbReference>
<dbReference type="GeneID" id="142680"/>
<dbReference type="KEGG" id="hsa:142680"/>
<dbReference type="MANE-Select" id="ENST00000673835.1">
    <property type="protein sequence ID" value="ENSP00000501114.1"/>
    <property type="RefSeq nucleotide sequence ID" value="NM_001177316.2"/>
    <property type="RefSeq protein sequence ID" value="NP_001170787.2"/>
</dbReference>
<dbReference type="UCSC" id="uc004cmf.1">
    <property type="organism name" value="human"/>
</dbReference>
<dbReference type="AGR" id="HGNC:20305"/>
<dbReference type="CTD" id="142680"/>
<dbReference type="DisGeNET" id="142680"/>
<dbReference type="GeneCards" id="SLC34A3"/>
<dbReference type="HGNC" id="HGNC:20305">
    <property type="gene designation" value="SLC34A3"/>
</dbReference>
<dbReference type="HPA" id="ENSG00000198569">
    <property type="expression patterns" value="Group enriched (intestine, kidney)"/>
</dbReference>
<dbReference type="MalaCards" id="SLC34A3"/>
<dbReference type="MIM" id="241530">
    <property type="type" value="phenotype"/>
</dbReference>
<dbReference type="MIM" id="609826">
    <property type="type" value="gene"/>
</dbReference>
<dbReference type="neXtProt" id="NX_Q8N130"/>
<dbReference type="OpenTargets" id="ENSG00000198569"/>
<dbReference type="Orphanet" id="157215">
    <property type="disease" value="Hereditary hypophosphatemic rickets with hypercalciuria"/>
</dbReference>
<dbReference type="PharmGKB" id="PA134930298"/>
<dbReference type="VEuPathDB" id="HostDB:ENSG00000198569"/>
<dbReference type="eggNOG" id="ENOG502QTG0">
    <property type="taxonomic scope" value="Eukaryota"/>
</dbReference>
<dbReference type="GeneTree" id="ENSGT00950000183177"/>
<dbReference type="HOGENOM" id="CLU_025063_0_0_1"/>
<dbReference type="InParanoid" id="Q8N130"/>
<dbReference type="OMA" id="VHSIFNW"/>
<dbReference type="OrthoDB" id="9484689at2759"/>
<dbReference type="PAN-GO" id="Q8N130">
    <property type="GO annotations" value="6 GO annotations based on evolutionary models"/>
</dbReference>
<dbReference type="PhylomeDB" id="Q8N130"/>
<dbReference type="TreeFam" id="TF313981"/>
<dbReference type="PathwayCommons" id="Q8N130"/>
<dbReference type="Reactome" id="R-HSA-427589">
    <property type="pathway name" value="Type II Na+/Pi cotransporters"/>
</dbReference>
<dbReference type="Reactome" id="R-HSA-5619097">
    <property type="pathway name" value="Defective SLC34A3 causes Hereditary hypophosphatemic rickets with hypercalciuria (HHRH)"/>
</dbReference>
<dbReference type="SABIO-RK" id="Q8N130"/>
<dbReference type="SignaLink" id="Q8N130"/>
<dbReference type="SIGNOR" id="Q8N130"/>
<dbReference type="BioGRID-ORCS" id="142680">
    <property type="hits" value="30 hits in 1145 CRISPR screens"/>
</dbReference>
<dbReference type="GeneWiki" id="SLC34A3"/>
<dbReference type="GenomeRNAi" id="142680"/>
<dbReference type="Pharos" id="Q8N130">
    <property type="development level" value="Tbio"/>
</dbReference>
<dbReference type="PRO" id="PR:Q8N130"/>
<dbReference type="Proteomes" id="UP000005640">
    <property type="component" value="Chromosome 9"/>
</dbReference>
<dbReference type="RNAct" id="Q8N130">
    <property type="molecule type" value="protein"/>
</dbReference>
<dbReference type="Bgee" id="ENSG00000198569">
    <property type="expression patterns" value="Expressed in lower esophagus mucosa and 90 other cell types or tissues"/>
</dbReference>
<dbReference type="ExpressionAtlas" id="Q8N130">
    <property type="expression patterns" value="baseline and differential"/>
</dbReference>
<dbReference type="GO" id="GO:0016324">
    <property type="term" value="C:apical plasma membrane"/>
    <property type="evidence" value="ECO:0000250"/>
    <property type="project" value="HGNC-UCL"/>
</dbReference>
<dbReference type="GO" id="GO:0005903">
    <property type="term" value="C:brush border"/>
    <property type="evidence" value="ECO:0000318"/>
    <property type="project" value="GO_Central"/>
</dbReference>
<dbReference type="GO" id="GO:0031526">
    <property type="term" value="C:brush border membrane"/>
    <property type="evidence" value="ECO:0000250"/>
    <property type="project" value="UniProtKB"/>
</dbReference>
<dbReference type="GO" id="GO:0005886">
    <property type="term" value="C:plasma membrane"/>
    <property type="evidence" value="ECO:0000304"/>
    <property type="project" value="Reactome"/>
</dbReference>
<dbReference type="GO" id="GO:0031982">
    <property type="term" value="C:vesicle"/>
    <property type="evidence" value="ECO:0000318"/>
    <property type="project" value="GO_Central"/>
</dbReference>
<dbReference type="GO" id="GO:0005436">
    <property type="term" value="F:sodium:phosphate symporter activity"/>
    <property type="evidence" value="ECO:0000314"/>
    <property type="project" value="UniProtKB"/>
</dbReference>
<dbReference type="GO" id="GO:0030643">
    <property type="term" value="P:intracellular phosphate ion homeostasis"/>
    <property type="evidence" value="ECO:0000314"/>
    <property type="project" value="UniProtKB"/>
</dbReference>
<dbReference type="GO" id="GO:0006817">
    <property type="term" value="P:phosphate ion transport"/>
    <property type="evidence" value="ECO:0000314"/>
    <property type="project" value="UniProtKB"/>
</dbReference>
<dbReference type="GO" id="GO:0006814">
    <property type="term" value="P:sodium ion transport"/>
    <property type="evidence" value="ECO:0000314"/>
    <property type="project" value="UniProtKB"/>
</dbReference>
<dbReference type="GO" id="GO:0044341">
    <property type="term" value="P:sodium-dependent phosphate transport"/>
    <property type="evidence" value="ECO:0000318"/>
    <property type="project" value="GO_Central"/>
</dbReference>
<dbReference type="InterPro" id="IPR003841">
    <property type="entry name" value="Na/Pi_transpt"/>
</dbReference>
<dbReference type="NCBIfam" id="TIGR01013">
    <property type="entry name" value="2a58"/>
    <property type="match status" value="1"/>
</dbReference>
<dbReference type="NCBIfam" id="NF037997">
    <property type="entry name" value="Na_Pi_symport"/>
    <property type="match status" value="1"/>
</dbReference>
<dbReference type="PANTHER" id="PTHR10010:SF35">
    <property type="entry name" value="SODIUM-DEPENDENT PHOSPHATE TRANSPORT PROTEIN 2C"/>
    <property type="match status" value="1"/>
</dbReference>
<dbReference type="PANTHER" id="PTHR10010">
    <property type="entry name" value="SOLUTE CARRIER FAMILY 34 SODIUM PHOSPHATE , MEMBER 2-RELATED"/>
    <property type="match status" value="1"/>
</dbReference>
<dbReference type="Pfam" id="PF02690">
    <property type="entry name" value="Na_Pi_cotrans"/>
    <property type="match status" value="2"/>
</dbReference>
<organism>
    <name type="scientific">Homo sapiens</name>
    <name type="common">Human</name>
    <dbReference type="NCBI Taxonomy" id="9606"/>
    <lineage>
        <taxon>Eukaryota</taxon>
        <taxon>Metazoa</taxon>
        <taxon>Chordata</taxon>
        <taxon>Craniata</taxon>
        <taxon>Vertebrata</taxon>
        <taxon>Euteleostomi</taxon>
        <taxon>Mammalia</taxon>
        <taxon>Eutheria</taxon>
        <taxon>Euarchontoglires</taxon>
        <taxon>Primates</taxon>
        <taxon>Haplorrhini</taxon>
        <taxon>Catarrhini</taxon>
        <taxon>Hominidae</taxon>
        <taxon>Homo</taxon>
    </lineage>
</organism>
<reference key="1">
    <citation type="journal article" date="2002" name="J. Biol. Chem.">
        <title>Growth-related renal type II Na/Pi cotransporter.</title>
        <authorList>
            <person name="Segawa H."/>
            <person name="Kaneko I."/>
            <person name="Takahashi A."/>
            <person name="Kuwahata M."/>
            <person name="Ito M."/>
            <person name="Ohkido I."/>
            <person name="Tatsumi S."/>
            <person name="Miyamoto K."/>
        </authorList>
    </citation>
    <scope>NUCLEOTIDE SEQUENCE [MRNA]</scope>
    <scope>FUNCTION</scope>
    <scope>TRANSPORTER ACTIVITY</scope>
    <scope>BIOPHYSICOCHEMICAL PROPERTIES</scope>
    <scope>TISSUE SPECIFICITY</scope>
    <scope>VARIANT VAL-513</scope>
    <source>
        <tissue>Kidney</tissue>
    </source>
</reference>
<reference key="2">
    <citation type="journal article" date="2004" name="Nat. Genet.">
        <title>Complete sequencing and characterization of 21,243 full-length human cDNAs.</title>
        <authorList>
            <person name="Ota T."/>
            <person name="Suzuki Y."/>
            <person name="Nishikawa T."/>
            <person name="Otsuki T."/>
            <person name="Sugiyama T."/>
            <person name="Irie R."/>
            <person name="Wakamatsu A."/>
            <person name="Hayashi K."/>
            <person name="Sato H."/>
            <person name="Nagai K."/>
            <person name="Kimura K."/>
            <person name="Makita H."/>
            <person name="Sekine M."/>
            <person name="Obayashi M."/>
            <person name="Nishi T."/>
            <person name="Shibahara T."/>
            <person name="Tanaka T."/>
            <person name="Ishii S."/>
            <person name="Yamamoto J."/>
            <person name="Saito K."/>
            <person name="Kawai Y."/>
            <person name="Isono Y."/>
            <person name="Nakamura Y."/>
            <person name="Nagahari K."/>
            <person name="Murakami K."/>
            <person name="Yasuda T."/>
            <person name="Iwayanagi T."/>
            <person name="Wagatsuma M."/>
            <person name="Shiratori A."/>
            <person name="Sudo H."/>
            <person name="Hosoiri T."/>
            <person name="Kaku Y."/>
            <person name="Kodaira H."/>
            <person name="Kondo H."/>
            <person name="Sugawara M."/>
            <person name="Takahashi M."/>
            <person name="Kanda K."/>
            <person name="Yokoi T."/>
            <person name="Furuya T."/>
            <person name="Kikkawa E."/>
            <person name="Omura Y."/>
            <person name="Abe K."/>
            <person name="Kamihara K."/>
            <person name="Katsuta N."/>
            <person name="Sato K."/>
            <person name="Tanikawa M."/>
            <person name="Yamazaki M."/>
            <person name="Ninomiya K."/>
            <person name="Ishibashi T."/>
            <person name="Yamashita H."/>
            <person name="Murakawa K."/>
            <person name="Fujimori K."/>
            <person name="Tanai H."/>
            <person name="Kimata M."/>
            <person name="Watanabe M."/>
            <person name="Hiraoka S."/>
            <person name="Chiba Y."/>
            <person name="Ishida S."/>
            <person name="Ono Y."/>
            <person name="Takiguchi S."/>
            <person name="Watanabe S."/>
            <person name="Yosida M."/>
            <person name="Hotuta T."/>
            <person name="Kusano J."/>
            <person name="Kanehori K."/>
            <person name="Takahashi-Fujii A."/>
            <person name="Hara H."/>
            <person name="Tanase T.-O."/>
            <person name="Nomura Y."/>
            <person name="Togiya S."/>
            <person name="Komai F."/>
            <person name="Hara R."/>
            <person name="Takeuchi K."/>
            <person name="Arita M."/>
            <person name="Imose N."/>
            <person name="Musashino K."/>
            <person name="Yuuki H."/>
            <person name="Oshima A."/>
            <person name="Sasaki N."/>
            <person name="Aotsuka S."/>
            <person name="Yoshikawa Y."/>
            <person name="Matsunawa H."/>
            <person name="Ichihara T."/>
            <person name="Shiohata N."/>
            <person name="Sano S."/>
            <person name="Moriya S."/>
            <person name="Momiyama H."/>
            <person name="Satoh N."/>
            <person name="Takami S."/>
            <person name="Terashima Y."/>
            <person name="Suzuki O."/>
            <person name="Nakagawa S."/>
            <person name="Senoh A."/>
            <person name="Mizoguchi H."/>
            <person name="Goto Y."/>
            <person name="Shimizu F."/>
            <person name="Wakebe H."/>
            <person name="Hishigaki H."/>
            <person name="Watanabe T."/>
            <person name="Sugiyama A."/>
            <person name="Takemoto M."/>
            <person name="Kawakami B."/>
            <person name="Yamazaki M."/>
            <person name="Watanabe K."/>
            <person name="Kumagai A."/>
            <person name="Itakura S."/>
            <person name="Fukuzumi Y."/>
            <person name="Fujimori Y."/>
            <person name="Komiyama M."/>
            <person name="Tashiro H."/>
            <person name="Tanigami A."/>
            <person name="Fujiwara T."/>
            <person name="Ono T."/>
            <person name="Yamada K."/>
            <person name="Fujii Y."/>
            <person name="Ozaki K."/>
            <person name="Hirao M."/>
            <person name="Ohmori Y."/>
            <person name="Kawabata A."/>
            <person name="Hikiji T."/>
            <person name="Kobatake N."/>
            <person name="Inagaki H."/>
            <person name="Ikema Y."/>
            <person name="Okamoto S."/>
            <person name="Okitani R."/>
            <person name="Kawakami T."/>
            <person name="Noguchi S."/>
            <person name="Itoh T."/>
            <person name="Shigeta K."/>
            <person name="Senba T."/>
            <person name="Matsumura K."/>
            <person name="Nakajima Y."/>
            <person name="Mizuno T."/>
            <person name="Morinaga M."/>
            <person name="Sasaki M."/>
            <person name="Togashi T."/>
            <person name="Oyama M."/>
            <person name="Hata H."/>
            <person name="Watanabe M."/>
            <person name="Komatsu T."/>
            <person name="Mizushima-Sugano J."/>
            <person name="Satoh T."/>
            <person name="Shirai Y."/>
            <person name="Takahashi Y."/>
            <person name="Nakagawa K."/>
            <person name="Okumura K."/>
            <person name="Nagase T."/>
            <person name="Nomura N."/>
            <person name="Kikuchi H."/>
            <person name="Masuho Y."/>
            <person name="Yamashita R."/>
            <person name="Nakai K."/>
            <person name="Yada T."/>
            <person name="Nakamura Y."/>
            <person name="Ohara O."/>
            <person name="Isogai T."/>
            <person name="Sugano S."/>
        </authorList>
    </citation>
    <scope>NUCLEOTIDE SEQUENCE [LARGE SCALE MRNA]</scope>
    <scope>VARIANT VAL-513</scope>
    <source>
        <tissue>Kidney</tissue>
    </source>
</reference>
<reference key="3">
    <citation type="journal article" date="2004" name="Nature">
        <title>DNA sequence and analysis of human chromosome 9.</title>
        <authorList>
            <person name="Humphray S.J."/>
            <person name="Oliver K."/>
            <person name="Hunt A.R."/>
            <person name="Plumb R.W."/>
            <person name="Loveland J.E."/>
            <person name="Howe K.L."/>
            <person name="Andrews T.D."/>
            <person name="Searle S."/>
            <person name="Hunt S.E."/>
            <person name="Scott C.E."/>
            <person name="Jones M.C."/>
            <person name="Ainscough R."/>
            <person name="Almeida J.P."/>
            <person name="Ambrose K.D."/>
            <person name="Ashwell R.I.S."/>
            <person name="Babbage A.K."/>
            <person name="Babbage S."/>
            <person name="Bagguley C.L."/>
            <person name="Bailey J."/>
            <person name="Banerjee R."/>
            <person name="Barker D.J."/>
            <person name="Barlow K.F."/>
            <person name="Bates K."/>
            <person name="Beasley H."/>
            <person name="Beasley O."/>
            <person name="Bird C.P."/>
            <person name="Bray-Allen S."/>
            <person name="Brown A.J."/>
            <person name="Brown J.Y."/>
            <person name="Burford D."/>
            <person name="Burrill W."/>
            <person name="Burton J."/>
            <person name="Carder C."/>
            <person name="Carter N.P."/>
            <person name="Chapman J.C."/>
            <person name="Chen Y."/>
            <person name="Clarke G."/>
            <person name="Clark S.Y."/>
            <person name="Clee C.M."/>
            <person name="Clegg S."/>
            <person name="Collier R.E."/>
            <person name="Corby N."/>
            <person name="Crosier M."/>
            <person name="Cummings A.T."/>
            <person name="Davies J."/>
            <person name="Dhami P."/>
            <person name="Dunn M."/>
            <person name="Dutta I."/>
            <person name="Dyer L.W."/>
            <person name="Earthrowl M.E."/>
            <person name="Faulkner L."/>
            <person name="Fleming C.J."/>
            <person name="Frankish A."/>
            <person name="Frankland J.A."/>
            <person name="French L."/>
            <person name="Fricker D.G."/>
            <person name="Garner P."/>
            <person name="Garnett J."/>
            <person name="Ghori J."/>
            <person name="Gilbert J.G.R."/>
            <person name="Glison C."/>
            <person name="Grafham D.V."/>
            <person name="Gribble S."/>
            <person name="Griffiths C."/>
            <person name="Griffiths-Jones S."/>
            <person name="Grocock R."/>
            <person name="Guy J."/>
            <person name="Hall R.E."/>
            <person name="Hammond S."/>
            <person name="Harley J.L."/>
            <person name="Harrison E.S.I."/>
            <person name="Hart E.A."/>
            <person name="Heath P.D."/>
            <person name="Henderson C.D."/>
            <person name="Hopkins B.L."/>
            <person name="Howard P.J."/>
            <person name="Howden P.J."/>
            <person name="Huckle E."/>
            <person name="Johnson C."/>
            <person name="Johnson D."/>
            <person name="Joy A.A."/>
            <person name="Kay M."/>
            <person name="Keenan S."/>
            <person name="Kershaw J.K."/>
            <person name="Kimberley A.M."/>
            <person name="King A."/>
            <person name="Knights A."/>
            <person name="Laird G.K."/>
            <person name="Langford C."/>
            <person name="Lawlor S."/>
            <person name="Leongamornlert D.A."/>
            <person name="Leversha M."/>
            <person name="Lloyd C."/>
            <person name="Lloyd D.M."/>
            <person name="Lovell J."/>
            <person name="Martin S."/>
            <person name="Mashreghi-Mohammadi M."/>
            <person name="Matthews L."/>
            <person name="McLaren S."/>
            <person name="McLay K.E."/>
            <person name="McMurray A."/>
            <person name="Milne S."/>
            <person name="Nickerson T."/>
            <person name="Nisbett J."/>
            <person name="Nordsiek G."/>
            <person name="Pearce A.V."/>
            <person name="Peck A.I."/>
            <person name="Porter K.M."/>
            <person name="Pandian R."/>
            <person name="Pelan S."/>
            <person name="Phillimore B."/>
            <person name="Povey S."/>
            <person name="Ramsey Y."/>
            <person name="Rand V."/>
            <person name="Scharfe M."/>
            <person name="Sehra H.K."/>
            <person name="Shownkeen R."/>
            <person name="Sims S.K."/>
            <person name="Skuce C.D."/>
            <person name="Smith M."/>
            <person name="Steward C.A."/>
            <person name="Swarbreck D."/>
            <person name="Sycamore N."/>
            <person name="Tester J."/>
            <person name="Thorpe A."/>
            <person name="Tracey A."/>
            <person name="Tromans A."/>
            <person name="Thomas D.W."/>
            <person name="Wall M."/>
            <person name="Wallis J.M."/>
            <person name="West A.P."/>
            <person name="Whitehead S.L."/>
            <person name="Willey D.L."/>
            <person name="Williams S.A."/>
            <person name="Wilming L."/>
            <person name="Wray P.W."/>
            <person name="Young L."/>
            <person name="Ashurst J.L."/>
            <person name="Coulson A."/>
            <person name="Blocker H."/>
            <person name="Durbin R.M."/>
            <person name="Sulston J.E."/>
            <person name="Hubbard T."/>
            <person name="Jackson M.J."/>
            <person name="Bentley D.R."/>
            <person name="Beck S."/>
            <person name="Rogers J."/>
            <person name="Dunham I."/>
        </authorList>
    </citation>
    <scope>NUCLEOTIDE SEQUENCE [LARGE SCALE GENOMIC DNA]</scope>
</reference>
<reference key="4">
    <citation type="journal article" date="2006" name="Am. J. Hum. Genet.">
        <title>SLC34A3 mutations in patients with hereditary hypophosphatemic rickets with hypercalciuria predict a key role for the sodium-phosphate cotransporter NaPi-IIc in maintaining phosphate homeostasis.</title>
        <authorList>
            <person name="Bergwitz C."/>
            <person name="Roslin N.M."/>
            <person name="Tieder M."/>
            <person name="Loredo-Osti J.C."/>
            <person name="Bastepe M."/>
            <person name="Abu-Zahra H."/>
            <person name="Frappier D."/>
            <person name="Burkett K."/>
            <person name="Carpenter T.O."/>
            <person name="Anderson D."/>
            <person name="Garabedian M."/>
            <person name="Sermet I."/>
            <person name="Fujiwara T.M."/>
            <person name="Morgan K."/>
            <person name="Tenenhouse H.S."/>
            <person name="Jueppner H."/>
        </authorList>
    </citation>
    <scope>VARIANTS HHRH PHE-138; LEU-192; ARG-196 AND TRP-468</scope>
    <scope>VARIANT VAL-513</scope>
</reference>
<reference key="5">
    <citation type="journal article" date="2006" name="Am. J. Hum. Genet.">
        <title>Hereditary hypophosphatemic rickets with hypercalciuria is caused by mutations in the sodium-phosphate cotransporter gene SLC34A3.</title>
        <authorList>
            <person name="Lorenz-Depiereux B."/>
            <person name="Benet-Pages A."/>
            <person name="Eckstein G."/>
            <person name="Tenenbaum-Rakover Y."/>
            <person name="Wagenstaller J."/>
            <person name="Tiosano D."/>
            <person name="Gershoni-Baruch R."/>
            <person name="Albers N."/>
            <person name="Lichtner P."/>
            <person name="Schnabel D."/>
            <person name="Hochberg Z."/>
            <person name="Strom T.M."/>
        </authorList>
    </citation>
    <scope>VARIANTS HHRH LEU-192; LEU-353 AND GLU-413</scope>
    <scope>VARIANTS HIS-67; ALA-180; ASN-237; SER-337 AND VAL-513</scope>
</reference>
<feature type="chain" id="PRO_0000068617" description="Sodium-dependent phosphate transport protein 2C">
    <location>
        <begin position="1"/>
        <end position="599"/>
    </location>
</feature>
<feature type="topological domain" description="Cytoplasmic" evidence="4">
    <location>
        <begin position="1"/>
        <end position="76"/>
    </location>
</feature>
<feature type="transmembrane region" description="Helical; Name=M1" evidence="4">
    <location>
        <begin position="77"/>
        <end position="97"/>
    </location>
</feature>
<feature type="topological domain" description="Extracellular" evidence="4">
    <location>
        <begin position="98"/>
        <end position="111"/>
    </location>
</feature>
<feature type="transmembrane region" description="Helical; Name=M2" evidence="4">
    <location>
        <begin position="112"/>
        <end position="132"/>
    </location>
</feature>
<feature type="topological domain" description="Cytoplasmic" evidence="4">
    <location>
        <begin position="133"/>
        <end position="188"/>
    </location>
</feature>
<feature type="transmembrane region" description="Helical; Name=M3" evidence="4">
    <location>
        <begin position="189"/>
        <end position="209"/>
    </location>
</feature>
<feature type="topological domain" description="Extracellular" evidence="4">
    <location>
        <begin position="210"/>
        <end position="322"/>
    </location>
</feature>
<feature type="transmembrane region" description="Helical; Name=M4" evidence="4">
    <location>
        <begin position="323"/>
        <end position="343"/>
    </location>
</feature>
<feature type="topological domain" description="Cytoplasmic" evidence="4">
    <location>
        <begin position="344"/>
        <end position="367"/>
    </location>
</feature>
<feature type="transmembrane region" description="Helical; Name=M5" evidence="4">
    <location>
        <begin position="368"/>
        <end position="388"/>
    </location>
</feature>
<feature type="topological domain" description="Extracellular" evidence="4">
    <location>
        <begin position="389"/>
        <end position="445"/>
    </location>
</feature>
<feature type="transmembrane region" description="Helical; Name=M6" evidence="4">
    <location>
        <begin position="446"/>
        <end position="466"/>
    </location>
</feature>
<feature type="topological domain" description="Cytoplasmic" evidence="4">
    <location>
        <begin position="467"/>
        <end position="485"/>
    </location>
</feature>
<feature type="transmembrane region" description="Helical; Name=M7" evidence="4">
    <location>
        <begin position="486"/>
        <end position="506"/>
    </location>
</feature>
<feature type="topological domain" description="Extracellular" evidence="4">
    <location>
        <begin position="507"/>
        <end position="510"/>
    </location>
</feature>
<feature type="transmembrane region" description="Helical; Name=M8" evidence="4">
    <location>
        <begin position="511"/>
        <end position="531"/>
    </location>
</feature>
<feature type="topological domain" description="Cytoplasmic" evidence="4">
    <location>
        <begin position="532"/>
        <end position="599"/>
    </location>
</feature>
<feature type="modified residue" description="Phosphoserine" evidence="3">
    <location>
        <position position="4"/>
    </location>
</feature>
<feature type="glycosylation site" description="N-linked (GlcNAc...) asparagine" evidence="4">
    <location>
        <position position="265"/>
    </location>
</feature>
<feature type="glycosylation site" description="N-linked (GlcNAc...) asparagine" evidence="4">
    <location>
        <position position="268"/>
    </location>
</feature>
<feature type="glycosylation site" description="N-linked (GlcNAc...) asparagine" evidence="4">
    <location>
        <position position="286"/>
    </location>
</feature>
<feature type="glycosylation site" description="N-linked (GlcNAc...) asparagine" evidence="4">
    <location>
        <position position="299"/>
    </location>
</feature>
<feature type="disulfide bond" evidence="1">
    <location>
        <begin position="276"/>
        <end position="309"/>
    </location>
</feature>
<feature type="sequence variant" id="VAR_025706" description="In dbSNP:rs34372115." evidence="8">
    <original>R</original>
    <variation>H</variation>
    <location>
        <position position="67"/>
    </location>
</feature>
<feature type="sequence variant" id="VAR_025707" description="In HHRH; dbSNP:rs141734934." evidence="7">
    <original>S</original>
    <variation>F</variation>
    <location>
        <position position="138"/>
    </location>
</feature>
<feature type="sequence variant" id="VAR_025708" description="In dbSNP:rs35643193." evidence="8">
    <original>G</original>
    <variation>A</variation>
    <location>
        <position position="180"/>
    </location>
</feature>
<feature type="sequence variant" id="VAR_025709" description="In HHRH; dbSNP:rs199690076." evidence="7 8">
    <original>S</original>
    <variation>L</variation>
    <location>
        <position position="192"/>
    </location>
</feature>
<feature type="sequence variant" id="VAR_025710" description="In HHRH; dbSNP:rs121918237." evidence="7">
    <original>G</original>
    <variation>R</variation>
    <location>
        <position position="196"/>
    </location>
</feature>
<feature type="sequence variant" id="VAR_025711" description="In dbSNP:rs145877051." evidence="8">
    <original>D</original>
    <variation>N</variation>
    <location>
        <position position="237"/>
    </location>
</feature>
<feature type="sequence variant" id="VAR_025712" description="In dbSNP:rs35699762." evidence="8">
    <original>G</original>
    <variation>S</variation>
    <location>
        <position position="337"/>
    </location>
</feature>
<feature type="sequence variant" id="VAR_025713" description="In HHRH; dbSNP:rs121918234." evidence="8">
    <original>R</original>
    <variation>L</variation>
    <location>
        <position position="353"/>
    </location>
</feature>
<feature type="sequence variant" id="VAR_025714" description="In HHRH; dbSNP:rs121918235." evidence="8">
    <original>A</original>
    <variation>E</variation>
    <location>
        <position position="413"/>
    </location>
</feature>
<feature type="sequence variant" id="VAR_025715" description="In HHRH; dbSNP:rs121918238." evidence="7">
    <original>R</original>
    <variation>W</variation>
    <location>
        <position position="468"/>
    </location>
</feature>
<feature type="sequence variant" id="VAR_025716" description="In dbSNP:rs28542318." evidence="5 6 7 8">
    <original>E</original>
    <variation>V</variation>
    <location>
        <position position="513"/>
    </location>
</feature>
<evidence type="ECO:0000250" key="1">
    <source>
        <dbReference type="UniProtKB" id="Q06496"/>
    </source>
</evidence>
<evidence type="ECO:0000250" key="2">
    <source>
        <dbReference type="UniProtKB" id="Q80SU6"/>
    </source>
</evidence>
<evidence type="ECO:0000250" key="3">
    <source>
        <dbReference type="UniProtKB" id="Q8K4R8"/>
    </source>
</evidence>
<evidence type="ECO:0000255" key="4"/>
<evidence type="ECO:0000269" key="5">
    <source>
    </source>
</evidence>
<evidence type="ECO:0000269" key="6">
    <source>
    </source>
</evidence>
<evidence type="ECO:0000269" key="7">
    <source>
    </source>
</evidence>
<evidence type="ECO:0000269" key="8">
    <source>
    </source>
</evidence>
<evidence type="ECO:0000305" key="9"/>
<evidence type="ECO:0000305" key="10">
    <source>
    </source>
</evidence>